<accession>A5F502</accession>
<accession>C3LXP9</accession>
<keyword id="KW-0963">Cytoplasm</keyword>
<keyword id="KW-0444">Lipid biosynthesis</keyword>
<keyword id="KW-0443">Lipid metabolism</keyword>
<keyword id="KW-0520">NAD</keyword>
<keyword id="KW-0521">NADP</keyword>
<keyword id="KW-0547">Nucleotide-binding</keyword>
<keyword id="KW-0560">Oxidoreductase</keyword>
<keyword id="KW-0594">Phospholipid biosynthesis</keyword>
<keyword id="KW-1208">Phospholipid metabolism</keyword>
<dbReference type="EC" id="1.1.1.94" evidence="1"/>
<dbReference type="EMBL" id="CP000627">
    <property type="protein sequence ID" value="ABQ20412.1"/>
    <property type="molecule type" value="Genomic_DNA"/>
</dbReference>
<dbReference type="EMBL" id="CP001235">
    <property type="protein sequence ID" value="ACP10749.1"/>
    <property type="molecule type" value="Genomic_DNA"/>
</dbReference>
<dbReference type="RefSeq" id="WP_000005325.1">
    <property type="nucleotide sequence ID" value="NZ_JAACZH010000007.1"/>
</dbReference>
<dbReference type="SMR" id="A5F502"/>
<dbReference type="KEGG" id="vco:VC0395_A2226"/>
<dbReference type="KEGG" id="vcr:VC395_2764"/>
<dbReference type="PATRIC" id="fig|345073.21.peg.2662"/>
<dbReference type="eggNOG" id="COG0240">
    <property type="taxonomic scope" value="Bacteria"/>
</dbReference>
<dbReference type="HOGENOM" id="CLU_033449_0_2_6"/>
<dbReference type="OrthoDB" id="9812273at2"/>
<dbReference type="UniPathway" id="UPA00940"/>
<dbReference type="Proteomes" id="UP000000249">
    <property type="component" value="Chromosome 2"/>
</dbReference>
<dbReference type="GO" id="GO:0005829">
    <property type="term" value="C:cytosol"/>
    <property type="evidence" value="ECO:0007669"/>
    <property type="project" value="TreeGrafter"/>
</dbReference>
<dbReference type="GO" id="GO:0047952">
    <property type="term" value="F:glycerol-3-phosphate dehydrogenase [NAD(P)+] activity"/>
    <property type="evidence" value="ECO:0007669"/>
    <property type="project" value="UniProtKB-UniRule"/>
</dbReference>
<dbReference type="GO" id="GO:0051287">
    <property type="term" value="F:NAD binding"/>
    <property type="evidence" value="ECO:0007669"/>
    <property type="project" value="InterPro"/>
</dbReference>
<dbReference type="GO" id="GO:0005975">
    <property type="term" value="P:carbohydrate metabolic process"/>
    <property type="evidence" value="ECO:0007669"/>
    <property type="project" value="InterPro"/>
</dbReference>
<dbReference type="GO" id="GO:0046167">
    <property type="term" value="P:glycerol-3-phosphate biosynthetic process"/>
    <property type="evidence" value="ECO:0007669"/>
    <property type="project" value="UniProtKB-UniRule"/>
</dbReference>
<dbReference type="GO" id="GO:0046168">
    <property type="term" value="P:glycerol-3-phosphate catabolic process"/>
    <property type="evidence" value="ECO:0007669"/>
    <property type="project" value="InterPro"/>
</dbReference>
<dbReference type="GO" id="GO:0046474">
    <property type="term" value="P:glycerophospholipid biosynthetic process"/>
    <property type="evidence" value="ECO:0007669"/>
    <property type="project" value="TreeGrafter"/>
</dbReference>
<dbReference type="FunFam" id="1.10.1040.10:FF:000001">
    <property type="entry name" value="Glycerol-3-phosphate dehydrogenase [NAD(P)+]"/>
    <property type="match status" value="1"/>
</dbReference>
<dbReference type="FunFam" id="3.40.50.720:FF:000019">
    <property type="entry name" value="Glycerol-3-phosphate dehydrogenase [NAD(P)+]"/>
    <property type="match status" value="1"/>
</dbReference>
<dbReference type="Gene3D" id="1.10.1040.10">
    <property type="entry name" value="N-(1-d-carboxylethyl)-l-norvaline Dehydrogenase, domain 2"/>
    <property type="match status" value="1"/>
</dbReference>
<dbReference type="Gene3D" id="3.40.50.720">
    <property type="entry name" value="NAD(P)-binding Rossmann-like Domain"/>
    <property type="match status" value="1"/>
</dbReference>
<dbReference type="HAMAP" id="MF_00394">
    <property type="entry name" value="NAD_Glyc3P_dehydrog"/>
    <property type="match status" value="1"/>
</dbReference>
<dbReference type="InterPro" id="IPR008927">
    <property type="entry name" value="6-PGluconate_DH-like_C_sf"/>
</dbReference>
<dbReference type="InterPro" id="IPR013328">
    <property type="entry name" value="6PGD_dom2"/>
</dbReference>
<dbReference type="InterPro" id="IPR006168">
    <property type="entry name" value="G3P_DH_NAD-dep"/>
</dbReference>
<dbReference type="InterPro" id="IPR006109">
    <property type="entry name" value="G3P_DH_NAD-dep_C"/>
</dbReference>
<dbReference type="InterPro" id="IPR011128">
    <property type="entry name" value="G3P_DH_NAD-dep_N"/>
</dbReference>
<dbReference type="InterPro" id="IPR036291">
    <property type="entry name" value="NAD(P)-bd_dom_sf"/>
</dbReference>
<dbReference type="NCBIfam" id="NF000939">
    <property type="entry name" value="PRK00094.1-1"/>
    <property type="match status" value="1"/>
</dbReference>
<dbReference type="NCBIfam" id="NF000940">
    <property type="entry name" value="PRK00094.1-2"/>
    <property type="match status" value="1"/>
</dbReference>
<dbReference type="NCBIfam" id="NF000942">
    <property type="entry name" value="PRK00094.1-4"/>
    <property type="match status" value="1"/>
</dbReference>
<dbReference type="PANTHER" id="PTHR11728">
    <property type="entry name" value="GLYCEROL-3-PHOSPHATE DEHYDROGENASE"/>
    <property type="match status" value="1"/>
</dbReference>
<dbReference type="PANTHER" id="PTHR11728:SF1">
    <property type="entry name" value="GLYCEROL-3-PHOSPHATE DEHYDROGENASE [NAD(+)] 2, CHLOROPLASTIC"/>
    <property type="match status" value="1"/>
</dbReference>
<dbReference type="Pfam" id="PF07479">
    <property type="entry name" value="NAD_Gly3P_dh_C"/>
    <property type="match status" value="1"/>
</dbReference>
<dbReference type="Pfam" id="PF01210">
    <property type="entry name" value="NAD_Gly3P_dh_N"/>
    <property type="match status" value="1"/>
</dbReference>
<dbReference type="PIRSF" id="PIRSF000114">
    <property type="entry name" value="Glycerol-3-P_dh"/>
    <property type="match status" value="1"/>
</dbReference>
<dbReference type="PRINTS" id="PR00077">
    <property type="entry name" value="GPDHDRGNASE"/>
</dbReference>
<dbReference type="SUPFAM" id="SSF48179">
    <property type="entry name" value="6-phosphogluconate dehydrogenase C-terminal domain-like"/>
    <property type="match status" value="1"/>
</dbReference>
<dbReference type="SUPFAM" id="SSF51735">
    <property type="entry name" value="NAD(P)-binding Rossmann-fold domains"/>
    <property type="match status" value="1"/>
</dbReference>
<dbReference type="PROSITE" id="PS00957">
    <property type="entry name" value="NAD_G3PDH"/>
    <property type="match status" value="1"/>
</dbReference>
<reference key="1">
    <citation type="submission" date="2007-03" db="EMBL/GenBank/DDBJ databases">
        <authorList>
            <person name="Heidelberg J."/>
        </authorList>
    </citation>
    <scope>NUCLEOTIDE SEQUENCE [LARGE SCALE GENOMIC DNA]</scope>
    <source>
        <strain>ATCC 39541 / Classical Ogawa 395 / O395</strain>
    </source>
</reference>
<reference key="2">
    <citation type="journal article" date="2008" name="PLoS ONE">
        <title>A recalibrated molecular clock and independent origins for the cholera pandemic clones.</title>
        <authorList>
            <person name="Feng L."/>
            <person name="Reeves P.R."/>
            <person name="Lan R."/>
            <person name="Ren Y."/>
            <person name="Gao C."/>
            <person name="Zhou Z."/>
            <person name="Ren Y."/>
            <person name="Cheng J."/>
            <person name="Wang W."/>
            <person name="Wang J."/>
            <person name="Qian W."/>
            <person name="Li D."/>
            <person name="Wang L."/>
        </authorList>
    </citation>
    <scope>NUCLEOTIDE SEQUENCE [LARGE SCALE GENOMIC DNA]</scope>
    <source>
        <strain>ATCC 39541 / Classical Ogawa 395 / O395</strain>
    </source>
</reference>
<proteinExistence type="inferred from homology"/>
<gene>
    <name evidence="1" type="primary">gpsA</name>
    <name type="ordered locus">VC0395_A2226</name>
    <name type="ordered locus">VC395_2764</name>
</gene>
<sequence length="344" mass="37110">MSETQNHNSYGKPVEMTVIGAGSYGTSLAISLARNGANIVLWGHDAEHMARLDADRANHEFLPGIAFPDTLIVETDLQKAVQASRDLLVVVPSHVFGIVLKSLQPHLRADSRICWATKGLEPETGRLLQDVAHDVLGDSYPLAVLSGPTFAKELAMGMPTAISVASPDAQFVRDLQEKIHCSKTFRVYANSDFIGMQLGGAVKNVIAIGAGMSDGIGFGANARTALITRGLAEMSRLGAALGAQPETFMGMAGLGDLVLTCTDNQSRNRRFGLALGQGKDVDTAQTDIGQVVEGYRNTKEVWMLAKRMGVEMPIVEQIYQVLYQGKDARLAAQDLLARDKKMER</sequence>
<comment type="function">
    <text evidence="1">Catalyzes the reduction of the glycolytic intermediate dihydroxyacetone phosphate (DHAP) to sn-glycerol 3-phosphate (G3P), the key precursor for phospholipid synthesis.</text>
</comment>
<comment type="catalytic activity">
    <reaction evidence="1">
        <text>sn-glycerol 3-phosphate + NAD(+) = dihydroxyacetone phosphate + NADH + H(+)</text>
        <dbReference type="Rhea" id="RHEA:11092"/>
        <dbReference type="ChEBI" id="CHEBI:15378"/>
        <dbReference type="ChEBI" id="CHEBI:57540"/>
        <dbReference type="ChEBI" id="CHEBI:57597"/>
        <dbReference type="ChEBI" id="CHEBI:57642"/>
        <dbReference type="ChEBI" id="CHEBI:57945"/>
        <dbReference type="EC" id="1.1.1.94"/>
    </reaction>
    <physiologicalReaction direction="right-to-left" evidence="1">
        <dbReference type="Rhea" id="RHEA:11094"/>
    </physiologicalReaction>
</comment>
<comment type="catalytic activity">
    <reaction evidence="1">
        <text>sn-glycerol 3-phosphate + NADP(+) = dihydroxyacetone phosphate + NADPH + H(+)</text>
        <dbReference type="Rhea" id="RHEA:11096"/>
        <dbReference type="ChEBI" id="CHEBI:15378"/>
        <dbReference type="ChEBI" id="CHEBI:57597"/>
        <dbReference type="ChEBI" id="CHEBI:57642"/>
        <dbReference type="ChEBI" id="CHEBI:57783"/>
        <dbReference type="ChEBI" id="CHEBI:58349"/>
        <dbReference type="EC" id="1.1.1.94"/>
    </reaction>
    <physiologicalReaction direction="right-to-left" evidence="1">
        <dbReference type="Rhea" id="RHEA:11098"/>
    </physiologicalReaction>
</comment>
<comment type="pathway">
    <text evidence="1">Membrane lipid metabolism; glycerophospholipid metabolism.</text>
</comment>
<comment type="subcellular location">
    <subcellularLocation>
        <location evidence="1">Cytoplasm</location>
    </subcellularLocation>
</comment>
<comment type="similarity">
    <text evidence="1">Belongs to the NAD-dependent glycerol-3-phosphate dehydrogenase family.</text>
</comment>
<feature type="chain" id="PRO_1000072236" description="Glycerol-3-phosphate dehydrogenase [NAD(P)+]">
    <location>
        <begin position="1"/>
        <end position="344"/>
    </location>
</feature>
<feature type="active site" description="Proton acceptor" evidence="1">
    <location>
        <position position="203"/>
    </location>
</feature>
<feature type="binding site" evidence="1">
    <location>
        <position position="23"/>
    </location>
    <ligand>
        <name>NADPH</name>
        <dbReference type="ChEBI" id="CHEBI:57783"/>
    </ligand>
</feature>
<feature type="binding site" evidence="1">
    <location>
        <position position="24"/>
    </location>
    <ligand>
        <name>NADPH</name>
        <dbReference type="ChEBI" id="CHEBI:57783"/>
    </ligand>
</feature>
<feature type="binding site" evidence="1">
    <location>
        <position position="44"/>
    </location>
    <ligand>
        <name>NADPH</name>
        <dbReference type="ChEBI" id="CHEBI:57783"/>
    </ligand>
</feature>
<feature type="binding site" evidence="1">
    <location>
        <position position="118"/>
    </location>
    <ligand>
        <name>NADPH</name>
        <dbReference type="ChEBI" id="CHEBI:57783"/>
    </ligand>
</feature>
<feature type="binding site" evidence="1">
    <location>
        <position position="118"/>
    </location>
    <ligand>
        <name>sn-glycerol 3-phosphate</name>
        <dbReference type="ChEBI" id="CHEBI:57597"/>
    </ligand>
</feature>
<feature type="binding site" evidence="1">
    <location>
        <position position="147"/>
    </location>
    <ligand>
        <name>sn-glycerol 3-phosphate</name>
        <dbReference type="ChEBI" id="CHEBI:57597"/>
    </ligand>
</feature>
<feature type="binding site" evidence="1">
    <location>
        <position position="149"/>
    </location>
    <ligand>
        <name>sn-glycerol 3-phosphate</name>
        <dbReference type="ChEBI" id="CHEBI:57597"/>
    </ligand>
</feature>
<feature type="binding site" evidence="1">
    <location>
        <position position="151"/>
    </location>
    <ligand>
        <name>NADPH</name>
        <dbReference type="ChEBI" id="CHEBI:57783"/>
    </ligand>
</feature>
<feature type="binding site" evidence="1">
    <location>
        <position position="203"/>
    </location>
    <ligand>
        <name>sn-glycerol 3-phosphate</name>
        <dbReference type="ChEBI" id="CHEBI:57597"/>
    </ligand>
</feature>
<feature type="binding site" evidence="1">
    <location>
        <position position="256"/>
    </location>
    <ligand>
        <name>sn-glycerol 3-phosphate</name>
        <dbReference type="ChEBI" id="CHEBI:57597"/>
    </ligand>
</feature>
<feature type="binding site" evidence="1">
    <location>
        <position position="266"/>
    </location>
    <ligand>
        <name>sn-glycerol 3-phosphate</name>
        <dbReference type="ChEBI" id="CHEBI:57597"/>
    </ligand>
</feature>
<feature type="binding site" evidence="1">
    <location>
        <position position="267"/>
    </location>
    <ligand>
        <name>NADPH</name>
        <dbReference type="ChEBI" id="CHEBI:57783"/>
    </ligand>
</feature>
<feature type="binding site" evidence="1">
    <location>
        <position position="267"/>
    </location>
    <ligand>
        <name>sn-glycerol 3-phosphate</name>
        <dbReference type="ChEBI" id="CHEBI:57597"/>
    </ligand>
</feature>
<feature type="binding site" evidence="1">
    <location>
        <position position="268"/>
    </location>
    <ligand>
        <name>sn-glycerol 3-phosphate</name>
        <dbReference type="ChEBI" id="CHEBI:57597"/>
    </ligand>
</feature>
<feature type="binding site" evidence="1">
    <location>
        <position position="291"/>
    </location>
    <ligand>
        <name>NADPH</name>
        <dbReference type="ChEBI" id="CHEBI:57783"/>
    </ligand>
</feature>
<feature type="binding site" evidence="1">
    <location>
        <position position="293"/>
    </location>
    <ligand>
        <name>NADPH</name>
        <dbReference type="ChEBI" id="CHEBI:57783"/>
    </ligand>
</feature>
<name>GPDA_VIBC3</name>
<evidence type="ECO:0000255" key="1">
    <source>
        <dbReference type="HAMAP-Rule" id="MF_00394"/>
    </source>
</evidence>
<protein>
    <recommendedName>
        <fullName evidence="1">Glycerol-3-phosphate dehydrogenase [NAD(P)+]</fullName>
        <ecNumber evidence="1">1.1.1.94</ecNumber>
    </recommendedName>
    <alternativeName>
        <fullName evidence="1">NAD(P)(+)-dependent glycerol-3-phosphate dehydrogenase</fullName>
    </alternativeName>
    <alternativeName>
        <fullName evidence="1">NAD(P)H-dependent dihydroxyacetone-phosphate reductase</fullName>
    </alternativeName>
</protein>
<organism>
    <name type="scientific">Vibrio cholerae serotype O1 (strain ATCC 39541 / Classical Ogawa 395 / O395)</name>
    <dbReference type="NCBI Taxonomy" id="345073"/>
    <lineage>
        <taxon>Bacteria</taxon>
        <taxon>Pseudomonadati</taxon>
        <taxon>Pseudomonadota</taxon>
        <taxon>Gammaproteobacteria</taxon>
        <taxon>Vibrionales</taxon>
        <taxon>Vibrionaceae</taxon>
        <taxon>Vibrio</taxon>
    </lineage>
</organism>